<gene>
    <name evidence="1" type="primary">rplT</name>
    <name type="ordered locus">VIBHAR_02082</name>
</gene>
<feature type="chain" id="PRO_1000049101" description="Large ribosomal subunit protein bL20">
    <location>
        <begin position="1"/>
        <end position="117"/>
    </location>
</feature>
<organism>
    <name type="scientific">Vibrio campbellii (strain ATCC BAA-1116)</name>
    <dbReference type="NCBI Taxonomy" id="2902295"/>
    <lineage>
        <taxon>Bacteria</taxon>
        <taxon>Pseudomonadati</taxon>
        <taxon>Pseudomonadota</taxon>
        <taxon>Gammaproteobacteria</taxon>
        <taxon>Vibrionales</taxon>
        <taxon>Vibrionaceae</taxon>
        <taxon>Vibrio</taxon>
    </lineage>
</organism>
<accession>A7N012</accession>
<proteinExistence type="inferred from homology"/>
<sequence>MPRVKRGVQARARHKKVLKQAKGYYGARSRVYRVAFQAVTKAGQYAYRDRRAKKRQFRQLWIARINAASRQNGLSYSRFINGLKKASIEIDRKILADIAVFDKAAFAVLVEKAKAAL</sequence>
<name>RL20_VIBC1</name>
<reference key="1">
    <citation type="submission" date="2007-08" db="EMBL/GenBank/DDBJ databases">
        <authorList>
            <consortium name="The Vibrio harveyi Genome Sequencing Project"/>
            <person name="Bassler B."/>
            <person name="Clifton S.W."/>
            <person name="Fulton L."/>
            <person name="Delehaunty K."/>
            <person name="Fronick C."/>
            <person name="Harrison M."/>
            <person name="Markivic C."/>
            <person name="Fulton R."/>
            <person name="Tin-Wollam A.-M."/>
            <person name="Shah N."/>
            <person name="Pepin K."/>
            <person name="Nash W."/>
            <person name="Thiruvilangam P."/>
            <person name="Bhonagiri V."/>
            <person name="Waters C."/>
            <person name="Tu K.C."/>
            <person name="Irgon J."/>
            <person name="Wilson R.K."/>
        </authorList>
    </citation>
    <scope>NUCLEOTIDE SEQUENCE [LARGE SCALE GENOMIC DNA]</scope>
    <source>
        <strain>ATCC BAA-1116 / BB120</strain>
    </source>
</reference>
<comment type="function">
    <text evidence="1">Binds directly to 23S ribosomal RNA and is necessary for the in vitro assembly process of the 50S ribosomal subunit. It is not involved in the protein synthesizing functions of that subunit.</text>
</comment>
<comment type="similarity">
    <text evidence="1">Belongs to the bacterial ribosomal protein bL20 family.</text>
</comment>
<evidence type="ECO:0000255" key="1">
    <source>
        <dbReference type="HAMAP-Rule" id="MF_00382"/>
    </source>
</evidence>
<evidence type="ECO:0000305" key="2"/>
<dbReference type="EMBL" id="CP000789">
    <property type="protein sequence ID" value="ABU71047.1"/>
    <property type="molecule type" value="Genomic_DNA"/>
</dbReference>
<dbReference type="RefSeq" id="WP_004727974.1">
    <property type="nucleotide sequence ID" value="NC_022269.1"/>
</dbReference>
<dbReference type="SMR" id="A7N012"/>
<dbReference type="GeneID" id="95677414"/>
<dbReference type="KEGG" id="vha:VIBHAR_02082"/>
<dbReference type="PATRIC" id="fig|338187.25.peg.611"/>
<dbReference type="Proteomes" id="UP000008152">
    <property type="component" value="Chromosome I"/>
</dbReference>
<dbReference type="GO" id="GO:1990904">
    <property type="term" value="C:ribonucleoprotein complex"/>
    <property type="evidence" value="ECO:0007669"/>
    <property type="project" value="UniProtKB-KW"/>
</dbReference>
<dbReference type="GO" id="GO:0005840">
    <property type="term" value="C:ribosome"/>
    <property type="evidence" value="ECO:0007669"/>
    <property type="project" value="UniProtKB-KW"/>
</dbReference>
<dbReference type="GO" id="GO:0019843">
    <property type="term" value="F:rRNA binding"/>
    <property type="evidence" value="ECO:0007669"/>
    <property type="project" value="UniProtKB-UniRule"/>
</dbReference>
<dbReference type="GO" id="GO:0003735">
    <property type="term" value="F:structural constituent of ribosome"/>
    <property type="evidence" value="ECO:0007669"/>
    <property type="project" value="InterPro"/>
</dbReference>
<dbReference type="GO" id="GO:0000027">
    <property type="term" value="P:ribosomal large subunit assembly"/>
    <property type="evidence" value="ECO:0007669"/>
    <property type="project" value="UniProtKB-UniRule"/>
</dbReference>
<dbReference type="GO" id="GO:0006412">
    <property type="term" value="P:translation"/>
    <property type="evidence" value="ECO:0007669"/>
    <property type="project" value="InterPro"/>
</dbReference>
<dbReference type="CDD" id="cd07026">
    <property type="entry name" value="Ribosomal_L20"/>
    <property type="match status" value="1"/>
</dbReference>
<dbReference type="FunFam" id="1.10.1900.20:FF:000001">
    <property type="entry name" value="50S ribosomal protein L20"/>
    <property type="match status" value="1"/>
</dbReference>
<dbReference type="Gene3D" id="6.10.160.10">
    <property type="match status" value="1"/>
</dbReference>
<dbReference type="Gene3D" id="1.10.1900.20">
    <property type="entry name" value="Ribosomal protein L20"/>
    <property type="match status" value="1"/>
</dbReference>
<dbReference type="HAMAP" id="MF_00382">
    <property type="entry name" value="Ribosomal_bL20"/>
    <property type="match status" value="1"/>
</dbReference>
<dbReference type="InterPro" id="IPR005813">
    <property type="entry name" value="Ribosomal_bL20"/>
</dbReference>
<dbReference type="InterPro" id="IPR049946">
    <property type="entry name" value="RIBOSOMAL_L20_CS"/>
</dbReference>
<dbReference type="InterPro" id="IPR035566">
    <property type="entry name" value="Ribosomal_protein_bL20_C"/>
</dbReference>
<dbReference type="NCBIfam" id="TIGR01032">
    <property type="entry name" value="rplT_bact"/>
    <property type="match status" value="1"/>
</dbReference>
<dbReference type="PANTHER" id="PTHR10986">
    <property type="entry name" value="39S RIBOSOMAL PROTEIN L20"/>
    <property type="match status" value="1"/>
</dbReference>
<dbReference type="Pfam" id="PF00453">
    <property type="entry name" value="Ribosomal_L20"/>
    <property type="match status" value="1"/>
</dbReference>
<dbReference type="PRINTS" id="PR00062">
    <property type="entry name" value="RIBOSOMALL20"/>
</dbReference>
<dbReference type="SUPFAM" id="SSF74731">
    <property type="entry name" value="Ribosomal protein L20"/>
    <property type="match status" value="1"/>
</dbReference>
<dbReference type="PROSITE" id="PS00937">
    <property type="entry name" value="RIBOSOMAL_L20"/>
    <property type="match status" value="1"/>
</dbReference>
<protein>
    <recommendedName>
        <fullName evidence="1">Large ribosomal subunit protein bL20</fullName>
    </recommendedName>
    <alternativeName>
        <fullName evidence="2">50S ribosomal protein L20</fullName>
    </alternativeName>
</protein>
<keyword id="KW-0687">Ribonucleoprotein</keyword>
<keyword id="KW-0689">Ribosomal protein</keyword>
<keyword id="KW-0694">RNA-binding</keyword>
<keyword id="KW-0699">rRNA-binding</keyword>